<accession>C0RE68</accession>
<sequence length="322" mass="34891">MMESGEALLKKLDGRLSGLRGRLTPDTGMDKITWFRAGGPAQVLFQPSDEEDLSAFLKAVPEEIPLLVVGIGSNLLVRDGGVPGFVVRLSAKGFGEVEQVCDTQLRAGAAAPDKRVAAAALEAGLAGFHFYHGIPGGIGGALRMNAGANGVETRERVVEVRALDRKGEVHVLSNADMGYAYRHSSASPDLIFTSVLFEGVPGERDDIRRAMDEVQHHRETVQPVREKTGGSTFKNPEGTSAWKEIDKAGCRGLRVGGAQMSEMHCNFMINTGNATGHDLETLGETVRARVFENSGIRLHWEIKRLGLFREGEQIEEFLGKIV</sequence>
<evidence type="ECO:0000255" key="1">
    <source>
        <dbReference type="HAMAP-Rule" id="MF_00037"/>
    </source>
</evidence>
<proteinExistence type="inferred from homology"/>
<gene>
    <name evidence="1" type="primary">murB</name>
    <name type="ordered locus">BMEA_A1477</name>
</gene>
<dbReference type="EC" id="1.3.1.98" evidence="1"/>
<dbReference type="EMBL" id="CP001488">
    <property type="protein sequence ID" value="ACO01190.1"/>
    <property type="molecule type" value="Genomic_DNA"/>
</dbReference>
<dbReference type="RefSeq" id="WP_004684020.1">
    <property type="nucleotide sequence ID" value="NC_012441.1"/>
</dbReference>
<dbReference type="SMR" id="C0RE68"/>
<dbReference type="GeneID" id="45124772"/>
<dbReference type="KEGG" id="bmi:BMEA_A1477"/>
<dbReference type="HOGENOM" id="CLU_035304_1_0_5"/>
<dbReference type="UniPathway" id="UPA00219"/>
<dbReference type="Proteomes" id="UP000001748">
    <property type="component" value="Chromosome I"/>
</dbReference>
<dbReference type="GO" id="GO:0005829">
    <property type="term" value="C:cytosol"/>
    <property type="evidence" value="ECO:0007669"/>
    <property type="project" value="TreeGrafter"/>
</dbReference>
<dbReference type="GO" id="GO:0071949">
    <property type="term" value="F:FAD binding"/>
    <property type="evidence" value="ECO:0007669"/>
    <property type="project" value="InterPro"/>
</dbReference>
<dbReference type="GO" id="GO:0008762">
    <property type="term" value="F:UDP-N-acetylmuramate dehydrogenase activity"/>
    <property type="evidence" value="ECO:0007669"/>
    <property type="project" value="UniProtKB-UniRule"/>
</dbReference>
<dbReference type="GO" id="GO:0051301">
    <property type="term" value="P:cell division"/>
    <property type="evidence" value="ECO:0007669"/>
    <property type="project" value="UniProtKB-KW"/>
</dbReference>
<dbReference type="GO" id="GO:0071555">
    <property type="term" value="P:cell wall organization"/>
    <property type="evidence" value="ECO:0007669"/>
    <property type="project" value="UniProtKB-KW"/>
</dbReference>
<dbReference type="GO" id="GO:0009252">
    <property type="term" value="P:peptidoglycan biosynthetic process"/>
    <property type="evidence" value="ECO:0007669"/>
    <property type="project" value="UniProtKB-UniRule"/>
</dbReference>
<dbReference type="GO" id="GO:0008360">
    <property type="term" value="P:regulation of cell shape"/>
    <property type="evidence" value="ECO:0007669"/>
    <property type="project" value="UniProtKB-KW"/>
</dbReference>
<dbReference type="Gene3D" id="3.30.465.10">
    <property type="match status" value="1"/>
</dbReference>
<dbReference type="Gene3D" id="3.90.78.10">
    <property type="entry name" value="UDP-N-acetylenolpyruvoylglucosamine reductase, C-terminal domain"/>
    <property type="match status" value="1"/>
</dbReference>
<dbReference type="Gene3D" id="3.30.43.10">
    <property type="entry name" value="Uridine Diphospho-n-acetylenolpyruvylglucosamine Reductase, domain 2"/>
    <property type="match status" value="1"/>
</dbReference>
<dbReference type="HAMAP" id="MF_00037">
    <property type="entry name" value="MurB"/>
    <property type="match status" value="1"/>
</dbReference>
<dbReference type="InterPro" id="IPR016166">
    <property type="entry name" value="FAD-bd_PCMH"/>
</dbReference>
<dbReference type="InterPro" id="IPR036318">
    <property type="entry name" value="FAD-bd_PCMH-like_sf"/>
</dbReference>
<dbReference type="InterPro" id="IPR016167">
    <property type="entry name" value="FAD-bd_PCMH_sub1"/>
</dbReference>
<dbReference type="InterPro" id="IPR016169">
    <property type="entry name" value="FAD-bd_PCMH_sub2"/>
</dbReference>
<dbReference type="InterPro" id="IPR003170">
    <property type="entry name" value="MurB"/>
</dbReference>
<dbReference type="InterPro" id="IPR011601">
    <property type="entry name" value="MurB_C"/>
</dbReference>
<dbReference type="InterPro" id="IPR036635">
    <property type="entry name" value="MurB_C_sf"/>
</dbReference>
<dbReference type="InterPro" id="IPR006094">
    <property type="entry name" value="Oxid_FAD_bind_N"/>
</dbReference>
<dbReference type="NCBIfam" id="TIGR00179">
    <property type="entry name" value="murB"/>
    <property type="match status" value="1"/>
</dbReference>
<dbReference type="NCBIfam" id="NF010480">
    <property type="entry name" value="PRK13905.1"/>
    <property type="match status" value="1"/>
</dbReference>
<dbReference type="PANTHER" id="PTHR21071">
    <property type="entry name" value="UDP-N-ACETYLENOLPYRUVOYLGLUCOSAMINE REDUCTASE"/>
    <property type="match status" value="1"/>
</dbReference>
<dbReference type="PANTHER" id="PTHR21071:SF4">
    <property type="entry name" value="UDP-N-ACETYLENOLPYRUVOYLGLUCOSAMINE REDUCTASE"/>
    <property type="match status" value="1"/>
</dbReference>
<dbReference type="Pfam" id="PF01565">
    <property type="entry name" value="FAD_binding_4"/>
    <property type="match status" value="1"/>
</dbReference>
<dbReference type="Pfam" id="PF02873">
    <property type="entry name" value="MurB_C"/>
    <property type="match status" value="1"/>
</dbReference>
<dbReference type="SUPFAM" id="SSF56176">
    <property type="entry name" value="FAD-binding/transporter-associated domain-like"/>
    <property type="match status" value="1"/>
</dbReference>
<dbReference type="SUPFAM" id="SSF56194">
    <property type="entry name" value="Uridine diphospho-N-Acetylenolpyruvylglucosamine reductase, MurB, C-terminal domain"/>
    <property type="match status" value="1"/>
</dbReference>
<dbReference type="PROSITE" id="PS51387">
    <property type="entry name" value="FAD_PCMH"/>
    <property type="match status" value="1"/>
</dbReference>
<keyword id="KW-0131">Cell cycle</keyword>
<keyword id="KW-0132">Cell division</keyword>
<keyword id="KW-0133">Cell shape</keyword>
<keyword id="KW-0961">Cell wall biogenesis/degradation</keyword>
<keyword id="KW-0963">Cytoplasm</keyword>
<keyword id="KW-0274">FAD</keyword>
<keyword id="KW-0285">Flavoprotein</keyword>
<keyword id="KW-0521">NADP</keyword>
<keyword id="KW-0560">Oxidoreductase</keyword>
<keyword id="KW-0573">Peptidoglycan synthesis</keyword>
<comment type="function">
    <text evidence="1">Cell wall formation.</text>
</comment>
<comment type="catalytic activity">
    <reaction evidence="1">
        <text>UDP-N-acetyl-alpha-D-muramate + NADP(+) = UDP-N-acetyl-3-O-(1-carboxyvinyl)-alpha-D-glucosamine + NADPH + H(+)</text>
        <dbReference type="Rhea" id="RHEA:12248"/>
        <dbReference type="ChEBI" id="CHEBI:15378"/>
        <dbReference type="ChEBI" id="CHEBI:57783"/>
        <dbReference type="ChEBI" id="CHEBI:58349"/>
        <dbReference type="ChEBI" id="CHEBI:68483"/>
        <dbReference type="ChEBI" id="CHEBI:70757"/>
        <dbReference type="EC" id="1.3.1.98"/>
    </reaction>
</comment>
<comment type="cofactor">
    <cofactor evidence="1">
        <name>FAD</name>
        <dbReference type="ChEBI" id="CHEBI:57692"/>
    </cofactor>
</comment>
<comment type="pathway">
    <text evidence="1">Cell wall biogenesis; peptidoglycan biosynthesis.</text>
</comment>
<comment type="subcellular location">
    <subcellularLocation>
        <location evidence="1">Cytoplasm</location>
    </subcellularLocation>
</comment>
<comment type="similarity">
    <text evidence="1">Belongs to the MurB family.</text>
</comment>
<organism>
    <name type="scientific">Brucella melitensis biotype 2 (strain ATCC 23457)</name>
    <dbReference type="NCBI Taxonomy" id="546272"/>
    <lineage>
        <taxon>Bacteria</taxon>
        <taxon>Pseudomonadati</taxon>
        <taxon>Pseudomonadota</taxon>
        <taxon>Alphaproteobacteria</taxon>
        <taxon>Hyphomicrobiales</taxon>
        <taxon>Brucellaceae</taxon>
        <taxon>Brucella/Ochrobactrum group</taxon>
        <taxon>Brucella</taxon>
    </lineage>
</organism>
<feature type="chain" id="PRO_1000191401" description="UDP-N-acetylenolpyruvoylglucosamine reductase">
    <location>
        <begin position="1"/>
        <end position="322"/>
    </location>
</feature>
<feature type="domain" description="FAD-binding PCMH-type" evidence="1">
    <location>
        <begin position="36"/>
        <end position="202"/>
    </location>
</feature>
<feature type="active site" evidence="1">
    <location>
        <position position="182"/>
    </location>
</feature>
<feature type="active site" description="Proton donor" evidence="1">
    <location>
        <position position="231"/>
    </location>
</feature>
<feature type="active site" evidence="1">
    <location>
        <position position="301"/>
    </location>
</feature>
<name>MURB_BRUMB</name>
<reference key="1">
    <citation type="submission" date="2009-03" db="EMBL/GenBank/DDBJ databases">
        <title>Brucella melitensis ATCC 23457 whole genome shotgun sequencing project.</title>
        <authorList>
            <person name="Setubal J.C."/>
            <person name="Boyle S."/>
            <person name="Crasta O.R."/>
            <person name="Gillespie J.J."/>
            <person name="Kenyon R.W."/>
            <person name="Lu J."/>
            <person name="Mane S."/>
            <person name="Nagrani S."/>
            <person name="Shallom J.M."/>
            <person name="Shallom S."/>
            <person name="Shukla M."/>
            <person name="Snyder E.E."/>
            <person name="Sobral B.W."/>
            <person name="Wattam A.R."/>
            <person name="Will R."/>
            <person name="Williams K."/>
            <person name="Yoo H."/>
            <person name="Munk C."/>
            <person name="Tapia R."/>
            <person name="Han C."/>
            <person name="Detter J.C."/>
            <person name="Bruce D."/>
            <person name="Brettin T.S."/>
        </authorList>
    </citation>
    <scope>NUCLEOTIDE SEQUENCE [LARGE SCALE GENOMIC DNA]</scope>
    <source>
        <strain>ATCC 23457</strain>
    </source>
</reference>
<protein>
    <recommendedName>
        <fullName evidence="1">UDP-N-acetylenolpyruvoylglucosamine reductase</fullName>
        <ecNumber evidence="1">1.3.1.98</ecNumber>
    </recommendedName>
    <alternativeName>
        <fullName evidence="1">UDP-N-acetylmuramate dehydrogenase</fullName>
    </alternativeName>
</protein>